<proteinExistence type="inferred from homology"/>
<comment type="function">
    <text evidence="1">Binds directly to 23S ribosomal RNA and is necessary for the in vitro assembly process of the 50S ribosomal subunit. It is not involved in the protein synthesizing functions of that subunit.</text>
</comment>
<comment type="similarity">
    <text evidence="1">Belongs to the bacterial ribosomal protein bL20 family.</text>
</comment>
<organism>
    <name type="scientific">Bifidobacterium longum (strain DJO10A)</name>
    <dbReference type="NCBI Taxonomy" id="205913"/>
    <lineage>
        <taxon>Bacteria</taxon>
        <taxon>Bacillati</taxon>
        <taxon>Actinomycetota</taxon>
        <taxon>Actinomycetes</taxon>
        <taxon>Bifidobacteriales</taxon>
        <taxon>Bifidobacteriaceae</taxon>
        <taxon>Bifidobacterium</taxon>
    </lineage>
</organism>
<accession>B3DQT4</accession>
<feature type="chain" id="PRO_1000122276" description="Large ribosomal subunit protein bL20">
    <location>
        <begin position="1"/>
        <end position="127"/>
    </location>
</feature>
<keyword id="KW-0687">Ribonucleoprotein</keyword>
<keyword id="KW-0689">Ribosomal protein</keyword>
<keyword id="KW-0694">RNA-binding</keyword>
<keyword id="KW-0699">rRNA-binding</keyword>
<sequence>MARVKRAVNAHKKRRVVLERASGYRGQRSRLYRKAKEQLLHSFNYNFRDRKARKGDFRKLWIQRINAAVRAEGITYNRFIQGLRLAGIELDRRALAEIAVSDPDTFKTIVDAAKAALPEDVNAPVEA</sequence>
<name>RL20_BIFLD</name>
<reference key="1">
    <citation type="journal article" date="2008" name="BMC Genomics">
        <title>Comparative genomic analysis of the gut bacterium Bifidobacterium longum reveals loci susceptible to deletion during pure culture growth.</title>
        <authorList>
            <person name="Lee J.H."/>
            <person name="Karamychev V.N."/>
            <person name="Kozyavkin S.A."/>
            <person name="Mills D."/>
            <person name="Pavlov A.R."/>
            <person name="Pavlova N.V."/>
            <person name="Polouchine N.N."/>
            <person name="Richardson P.M."/>
            <person name="Shakhova V.V."/>
            <person name="Slesarev A.I."/>
            <person name="Weimer B."/>
            <person name="O'Sullivan D.J."/>
        </authorList>
    </citation>
    <scope>NUCLEOTIDE SEQUENCE [LARGE SCALE GENOMIC DNA]</scope>
    <source>
        <strain>DJO10A</strain>
    </source>
</reference>
<evidence type="ECO:0000255" key="1">
    <source>
        <dbReference type="HAMAP-Rule" id="MF_00382"/>
    </source>
</evidence>
<evidence type="ECO:0000305" key="2"/>
<dbReference type="EMBL" id="CP000605">
    <property type="protein sequence ID" value="ACD97680.1"/>
    <property type="molecule type" value="Genomic_DNA"/>
</dbReference>
<dbReference type="RefSeq" id="WP_007052594.1">
    <property type="nucleotide sequence ID" value="NZ_AABM02000003.1"/>
</dbReference>
<dbReference type="SMR" id="B3DQT4"/>
<dbReference type="GeneID" id="69578456"/>
<dbReference type="KEGG" id="blj:BLD_0234"/>
<dbReference type="HOGENOM" id="CLU_123265_0_0_11"/>
<dbReference type="Proteomes" id="UP000002419">
    <property type="component" value="Chromosome"/>
</dbReference>
<dbReference type="GO" id="GO:1990904">
    <property type="term" value="C:ribonucleoprotein complex"/>
    <property type="evidence" value="ECO:0007669"/>
    <property type="project" value="UniProtKB-KW"/>
</dbReference>
<dbReference type="GO" id="GO:0005840">
    <property type="term" value="C:ribosome"/>
    <property type="evidence" value="ECO:0007669"/>
    <property type="project" value="UniProtKB-KW"/>
</dbReference>
<dbReference type="GO" id="GO:0019843">
    <property type="term" value="F:rRNA binding"/>
    <property type="evidence" value="ECO:0007669"/>
    <property type="project" value="UniProtKB-UniRule"/>
</dbReference>
<dbReference type="GO" id="GO:0003735">
    <property type="term" value="F:structural constituent of ribosome"/>
    <property type="evidence" value="ECO:0007669"/>
    <property type="project" value="InterPro"/>
</dbReference>
<dbReference type="GO" id="GO:0000027">
    <property type="term" value="P:ribosomal large subunit assembly"/>
    <property type="evidence" value="ECO:0007669"/>
    <property type="project" value="UniProtKB-UniRule"/>
</dbReference>
<dbReference type="GO" id="GO:0006412">
    <property type="term" value="P:translation"/>
    <property type="evidence" value="ECO:0007669"/>
    <property type="project" value="InterPro"/>
</dbReference>
<dbReference type="CDD" id="cd07026">
    <property type="entry name" value="Ribosomal_L20"/>
    <property type="match status" value="1"/>
</dbReference>
<dbReference type="FunFam" id="1.10.1900.20:FF:000001">
    <property type="entry name" value="50S ribosomal protein L20"/>
    <property type="match status" value="1"/>
</dbReference>
<dbReference type="Gene3D" id="6.10.160.10">
    <property type="match status" value="1"/>
</dbReference>
<dbReference type="Gene3D" id="1.10.1900.20">
    <property type="entry name" value="Ribosomal protein L20"/>
    <property type="match status" value="1"/>
</dbReference>
<dbReference type="HAMAP" id="MF_00382">
    <property type="entry name" value="Ribosomal_bL20"/>
    <property type="match status" value="1"/>
</dbReference>
<dbReference type="InterPro" id="IPR005813">
    <property type="entry name" value="Ribosomal_bL20"/>
</dbReference>
<dbReference type="InterPro" id="IPR049946">
    <property type="entry name" value="RIBOSOMAL_L20_CS"/>
</dbReference>
<dbReference type="InterPro" id="IPR035566">
    <property type="entry name" value="Ribosomal_protein_bL20_C"/>
</dbReference>
<dbReference type="NCBIfam" id="TIGR01032">
    <property type="entry name" value="rplT_bact"/>
    <property type="match status" value="1"/>
</dbReference>
<dbReference type="PANTHER" id="PTHR10986">
    <property type="entry name" value="39S RIBOSOMAL PROTEIN L20"/>
    <property type="match status" value="1"/>
</dbReference>
<dbReference type="Pfam" id="PF00453">
    <property type="entry name" value="Ribosomal_L20"/>
    <property type="match status" value="1"/>
</dbReference>
<dbReference type="PRINTS" id="PR00062">
    <property type="entry name" value="RIBOSOMALL20"/>
</dbReference>
<dbReference type="SUPFAM" id="SSF74731">
    <property type="entry name" value="Ribosomal protein L20"/>
    <property type="match status" value="1"/>
</dbReference>
<dbReference type="PROSITE" id="PS00937">
    <property type="entry name" value="RIBOSOMAL_L20"/>
    <property type="match status" value="1"/>
</dbReference>
<protein>
    <recommendedName>
        <fullName evidence="1">Large ribosomal subunit protein bL20</fullName>
    </recommendedName>
    <alternativeName>
        <fullName evidence="2">50S ribosomal protein L20</fullName>
    </alternativeName>
</protein>
<gene>
    <name evidence="1" type="primary">rplT</name>
    <name type="ordered locus">BLD_0234</name>
</gene>